<keyword id="KW-0963">Cytoplasm</keyword>
<keyword id="KW-0324">Glycolysis</keyword>
<keyword id="KW-0456">Lyase</keyword>
<keyword id="KW-0460">Magnesium</keyword>
<keyword id="KW-0479">Metal-binding</keyword>
<keyword id="KW-1185">Reference proteome</keyword>
<keyword id="KW-0964">Secreted</keyword>
<protein>
    <recommendedName>
        <fullName evidence="2">Enolase</fullName>
        <ecNumber evidence="2">4.2.1.11</ecNumber>
    </recommendedName>
    <alternativeName>
        <fullName evidence="2">2-phospho-D-glycerate hydro-lyase</fullName>
    </alternativeName>
    <alternativeName>
        <fullName evidence="2">2-phosphoglycerate dehydratase</fullName>
    </alternativeName>
</protein>
<accession>P0DM31</accession>
<accession>Q9K596</accession>
<gene>
    <name evidence="2" type="primary">eno</name>
    <name type="ordered locus">EF_1961</name>
</gene>
<organism>
    <name type="scientific">Enterococcus faecalis (strain ATCC 700802 / V583)</name>
    <dbReference type="NCBI Taxonomy" id="226185"/>
    <lineage>
        <taxon>Bacteria</taxon>
        <taxon>Bacillati</taxon>
        <taxon>Bacillota</taxon>
        <taxon>Bacilli</taxon>
        <taxon>Lactobacillales</taxon>
        <taxon>Enterococcaceae</taxon>
        <taxon>Enterococcus</taxon>
    </lineage>
</organism>
<proteinExistence type="inferred from homology"/>
<feature type="initiator methionine" description="Removed" evidence="1">
    <location>
        <position position="1"/>
    </location>
</feature>
<feature type="chain" id="PRO_0000133885" description="Enolase">
    <location>
        <begin position="2"/>
        <end position="432"/>
    </location>
</feature>
<feature type="active site" description="Proton donor" evidence="2">
    <location>
        <position position="205"/>
    </location>
</feature>
<feature type="active site" description="Proton acceptor" evidence="2">
    <location>
        <position position="340"/>
    </location>
</feature>
<feature type="binding site" evidence="2">
    <location>
        <position position="163"/>
    </location>
    <ligand>
        <name>(2R)-2-phosphoglycerate</name>
        <dbReference type="ChEBI" id="CHEBI:58289"/>
    </ligand>
</feature>
<feature type="binding site" evidence="2">
    <location>
        <position position="242"/>
    </location>
    <ligand>
        <name>Mg(2+)</name>
        <dbReference type="ChEBI" id="CHEBI:18420"/>
    </ligand>
</feature>
<feature type="binding site" evidence="2">
    <location>
        <position position="288"/>
    </location>
    <ligand>
        <name>Mg(2+)</name>
        <dbReference type="ChEBI" id="CHEBI:18420"/>
    </ligand>
</feature>
<feature type="binding site" evidence="2">
    <location>
        <position position="315"/>
    </location>
    <ligand>
        <name>Mg(2+)</name>
        <dbReference type="ChEBI" id="CHEBI:18420"/>
    </ligand>
</feature>
<feature type="binding site" evidence="2">
    <location>
        <position position="340"/>
    </location>
    <ligand>
        <name>(2R)-2-phosphoglycerate</name>
        <dbReference type="ChEBI" id="CHEBI:58289"/>
    </ligand>
</feature>
<feature type="binding site" evidence="2">
    <location>
        <position position="369"/>
    </location>
    <ligand>
        <name>(2R)-2-phosphoglycerate</name>
        <dbReference type="ChEBI" id="CHEBI:58289"/>
    </ligand>
</feature>
<feature type="binding site" evidence="2">
    <location>
        <position position="370"/>
    </location>
    <ligand>
        <name>(2R)-2-phosphoglycerate</name>
        <dbReference type="ChEBI" id="CHEBI:58289"/>
    </ligand>
</feature>
<feature type="binding site" evidence="2">
    <location>
        <position position="391"/>
    </location>
    <ligand>
        <name>(2R)-2-phosphoglycerate</name>
        <dbReference type="ChEBI" id="CHEBI:58289"/>
    </ligand>
</feature>
<reference key="1">
    <citation type="journal article" date="2003" name="Science">
        <title>Role of mobile DNA in the evolution of vancomycin-resistant Enterococcus faecalis.</title>
        <authorList>
            <person name="Paulsen I.T."/>
            <person name="Banerjei L."/>
            <person name="Myers G.S.A."/>
            <person name="Nelson K.E."/>
            <person name="Seshadri R."/>
            <person name="Read T.D."/>
            <person name="Fouts D.E."/>
            <person name="Eisen J.A."/>
            <person name="Gill S.R."/>
            <person name="Heidelberg J.F."/>
            <person name="Tettelin H."/>
            <person name="Dodson R.J."/>
            <person name="Umayam L.A."/>
            <person name="Brinkac L.M."/>
            <person name="Beanan M.J."/>
            <person name="Daugherty S.C."/>
            <person name="DeBoy R.T."/>
            <person name="Durkin S.A."/>
            <person name="Kolonay J.F."/>
            <person name="Madupu R."/>
            <person name="Nelson W.C."/>
            <person name="Vamathevan J.J."/>
            <person name="Tran B."/>
            <person name="Upton J."/>
            <person name="Hansen T."/>
            <person name="Shetty J."/>
            <person name="Khouri H.M."/>
            <person name="Utterback T.R."/>
            <person name="Radune D."/>
            <person name="Ketchum K.A."/>
            <person name="Dougherty B.A."/>
            <person name="Fraser C.M."/>
        </authorList>
    </citation>
    <scope>NUCLEOTIDE SEQUENCE [LARGE SCALE GENOMIC DNA]</scope>
    <source>
        <strain>ATCC 700802 / V583</strain>
    </source>
</reference>
<name>ENO_ENTFA</name>
<comment type="function">
    <text evidence="2">Catalyzes the reversible conversion of 2-phosphoglycerate (2-PG) into phosphoenolpyruvate (PEP). It is essential for the degradation of carbohydrates via glycolysis.</text>
</comment>
<comment type="catalytic activity">
    <reaction evidence="2">
        <text>(2R)-2-phosphoglycerate = phosphoenolpyruvate + H2O</text>
        <dbReference type="Rhea" id="RHEA:10164"/>
        <dbReference type="ChEBI" id="CHEBI:15377"/>
        <dbReference type="ChEBI" id="CHEBI:58289"/>
        <dbReference type="ChEBI" id="CHEBI:58702"/>
        <dbReference type="EC" id="4.2.1.11"/>
    </reaction>
</comment>
<comment type="cofactor">
    <cofactor evidence="2">
        <name>Mg(2+)</name>
        <dbReference type="ChEBI" id="CHEBI:18420"/>
    </cofactor>
    <text evidence="2">Binds a second Mg(2+) ion via substrate during catalysis.</text>
</comment>
<comment type="pathway">
    <text evidence="2">Carbohydrate degradation; glycolysis; pyruvate from D-glyceraldehyde 3-phosphate: step 4/5.</text>
</comment>
<comment type="subcellular location">
    <subcellularLocation>
        <location evidence="2">Cytoplasm</location>
    </subcellularLocation>
    <subcellularLocation>
        <location evidence="2">Secreted</location>
    </subcellularLocation>
    <subcellularLocation>
        <location evidence="2">Cell surface</location>
    </subcellularLocation>
    <text evidence="2">Fractions of enolase are present in both the cytoplasm and on the cell surface.</text>
</comment>
<comment type="similarity">
    <text evidence="2">Belongs to the enolase family.</text>
</comment>
<evidence type="ECO:0000250" key="1"/>
<evidence type="ECO:0000255" key="2">
    <source>
        <dbReference type="HAMAP-Rule" id="MF_00318"/>
    </source>
</evidence>
<dbReference type="EC" id="4.2.1.11" evidence="2"/>
<dbReference type="EMBL" id="AE016830">
    <property type="protein sequence ID" value="AAO81707.1"/>
    <property type="molecule type" value="Genomic_DNA"/>
</dbReference>
<dbReference type="RefSeq" id="NP_815637.1">
    <property type="nucleotide sequence ID" value="NC_004668.1"/>
</dbReference>
<dbReference type="RefSeq" id="WP_002357098.1">
    <property type="nucleotide sequence ID" value="NZ_KE136528.1"/>
</dbReference>
<dbReference type="SMR" id="P0DM31"/>
<dbReference type="STRING" id="226185.EF_1961"/>
<dbReference type="EnsemblBacteria" id="AAO81707">
    <property type="protein sequence ID" value="AAO81707"/>
    <property type="gene ID" value="EF_1961"/>
</dbReference>
<dbReference type="GeneID" id="60894196"/>
<dbReference type="KEGG" id="efa:EF1961"/>
<dbReference type="PATRIC" id="fig|226185.45.peg.1564"/>
<dbReference type="eggNOG" id="COG0148">
    <property type="taxonomic scope" value="Bacteria"/>
</dbReference>
<dbReference type="HOGENOM" id="CLU_031223_2_1_9"/>
<dbReference type="UniPathway" id="UPA00109">
    <property type="reaction ID" value="UER00187"/>
</dbReference>
<dbReference type="Proteomes" id="UP000001415">
    <property type="component" value="Chromosome"/>
</dbReference>
<dbReference type="GO" id="GO:0009986">
    <property type="term" value="C:cell surface"/>
    <property type="evidence" value="ECO:0007669"/>
    <property type="project" value="UniProtKB-SubCell"/>
</dbReference>
<dbReference type="GO" id="GO:0005576">
    <property type="term" value="C:extracellular region"/>
    <property type="evidence" value="ECO:0007669"/>
    <property type="project" value="UniProtKB-SubCell"/>
</dbReference>
<dbReference type="GO" id="GO:0000015">
    <property type="term" value="C:phosphopyruvate hydratase complex"/>
    <property type="evidence" value="ECO:0007669"/>
    <property type="project" value="InterPro"/>
</dbReference>
<dbReference type="GO" id="GO:0000287">
    <property type="term" value="F:magnesium ion binding"/>
    <property type="evidence" value="ECO:0007669"/>
    <property type="project" value="UniProtKB-UniRule"/>
</dbReference>
<dbReference type="GO" id="GO:0004634">
    <property type="term" value="F:phosphopyruvate hydratase activity"/>
    <property type="evidence" value="ECO:0007669"/>
    <property type="project" value="UniProtKB-UniRule"/>
</dbReference>
<dbReference type="GO" id="GO:0006096">
    <property type="term" value="P:glycolytic process"/>
    <property type="evidence" value="ECO:0007669"/>
    <property type="project" value="UniProtKB-UniRule"/>
</dbReference>
<dbReference type="CDD" id="cd03313">
    <property type="entry name" value="enolase"/>
    <property type="match status" value="1"/>
</dbReference>
<dbReference type="FunFam" id="3.20.20.120:FF:000001">
    <property type="entry name" value="Enolase"/>
    <property type="match status" value="1"/>
</dbReference>
<dbReference type="FunFam" id="3.30.390.10:FF:000001">
    <property type="entry name" value="Enolase"/>
    <property type="match status" value="1"/>
</dbReference>
<dbReference type="Gene3D" id="3.20.20.120">
    <property type="entry name" value="Enolase-like C-terminal domain"/>
    <property type="match status" value="1"/>
</dbReference>
<dbReference type="Gene3D" id="3.30.390.10">
    <property type="entry name" value="Enolase-like, N-terminal domain"/>
    <property type="match status" value="1"/>
</dbReference>
<dbReference type="HAMAP" id="MF_00318">
    <property type="entry name" value="Enolase"/>
    <property type="match status" value="1"/>
</dbReference>
<dbReference type="InterPro" id="IPR000941">
    <property type="entry name" value="Enolase"/>
</dbReference>
<dbReference type="InterPro" id="IPR036849">
    <property type="entry name" value="Enolase-like_C_sf"/>
</dbReference>
<dbReference type="InterPro" id="IPR029017">
    <property type="entry name" value="Enolase-like_N"/>
</dbReference>
<dbReference type="InterPro" id="IPR020810">
    <property type="entry name" value="Enolase_C"/>
</dbReference>
<dbReference type="InterPro" id="IPR020809">
    <property type="entry name" value="Enolase_CS"/>
</dbReference>
<dbReference type="InterPro" id="IPR020811">
    <property type="entry name" value="Enolase_N"/>
</dbReference>
<dbReference type="NCBIfam" id="TIGR01060">
    <property type="entry name" value="eno"/>
    <property type="match status" value="1"/>
</dbReference>
<dbReference type="PANTHER" id="PTHR11902">
    <property type="entry name" value="ENOLASE"/>
    <property type="match status" value="1"/>
</dbReference>
<dbReference type="PANTHER" id="PTHR11902:SF1">
    <property type="entry name" value="ENOLASE"/>
    <property type="match status" value="1"/>
</dbReference>
<dbReference type="Pfam" id="PF00113">
    <property type="entry name" value="Enolase_C"/>
    <property type="match status" value="1"/>
</dbReference>
<dbReference type="Pfam" id="PF03952">
    <property type="entry name" value="Enolase_N"/>
    <property type="match status" value="1"/>
</dbReference>
<dbReference type="PIRSF" id="PIRSF001400">
    <property type="entry name" value="Enolase"/>
    <property type="match status" value="1"/>
</dbReference>
<dbReference type="PRINTS" id="PR00148">
    <property type="entry name" value="ENOLASE"/>
</dbReference>
<dbReference type="SFLD" id="SFLDF00002">
    <property type="entry name" value="enolase"/>
    <property type="match status" value="1"/>
</dbReference>
<dbReference type="SFLD" id="SFLDG00178">
    <property type="entry name" value="enolase"/>
    <property type="match status" value="1"/>
</dbReference>
<dbReference type="SMART" id="SM01192">
    <property type="entry name" value="Enolase_C"/>
    <property type="match status" value="1"/>
</dbReference>
<dbReference type="SMART" id="SM01193">
    <property type="entry name" value="Enolase_N"/>
    <property type="match status" value="1"/>
</dbReference>
<dbReference type="SUPFAM" id="SSF51604">
    <property type="entry name" value="Enolase C-terminal domain-like"/>
    <property type="match status" value="1"/>
</dbReference>
<dbReference type="SUPFAM" id="SSF54826">
    <property type="entry name" value="Enolase N-terminal domain-like"/>
    <property type="match status" value="1"/>
</dbReference>
<dbReference type="PROSITE" id="PS00164">
    <property type="entry name" value="ENOLASE"/>
    <property type="match status" value="1"/>
</dbReference>
<sequence length="432" mass="46511">MSIITDIYAREVLDSRGNPTIEVEVYTESGAFGRGMVPSGASTGEYEAVELRDGDKARYLGKGVTKAVDNVNNIIAEAIIGYDVRDQMAIDKAMIDLDGTPNKGKLGANAILGVSIAVARAAADYLEVPLYHYLGGFNTKVLPTPMMNIINGGSHADNSIDFQEFMIMPVGAPTFKEALRMGAEVFHALASILKGRGLATSVGDEGGFAPNLGSNEEGFEVIIEAIEKAGYVPGKDVVLAMDAASSEFYDKEKGVYVLADSGEGEKTTEEMIAFYEELVSKYPIISIEDGLDENDWDGFKKLTEVLGDKVQLVGDDLFVTNTTKLAEGIEKGIANSILIKVNQIGTLTETFEAIEMAKEAGYTAVVSHRSGETEDSTISDIAVATNAGQIKTGSLSRTDRIAKYNQLLRIEDQLGDVAEYKGLKSFYNLKNK</sequence>